<reference key="1">
    <citation type="submission" date="2008-10" db="EMBL/GenBank/DDBJ databases">
        <title>Genome sequence of Bacillus anthracis str. CDC 684.</title>
        <authorList>
            <person name="Dodson R.J."/>
            <person name="Munk A.C."/>
            <person name="Brettin T."/>
            <person name="Bruce D."/>
            <person name="Detter C."/>
            <person name="Tapia R."/>
            <person name="Han C."/>
            <person name="Sutton G."/>
            <person name="Sims D."/>
        </authorList>
    </citation>
    <scope>NUCLEOTIDE SEQUENCE [LARGE SCALE GENOMIC DNA]</scope>
    <source>
        <strain>CDC 684 / NRRL 3495</strain>
    </source>
</reference>
<name>AMPA_BACAC</name>
<gene>
    <name evidence="1" type="primary">pepA</name>
    <name type="ordered locus">BAMEG_5213</name>
</gene>
<comment type="function">
    <text evidence="1">Presumably involved in the processing and regular turnover of intracellular proteins. Catalyzes the removal of unsubstituted N-terminal amino acids from various peptides.</text>
</comment>
<comment type="catalytic activity">
    <reaction evidence="1">
        <text>Release of an N-terminal amino acid, Xaa-|-Yaa-, in which Xaa is preferably Leu, but may be other amino acids including Pro although not Arg or Lys, and Yaa may be Pro. Amino acid amides and methyl esters are also readily hydrolyzed, but rates on arylamides are exceedingly low.</text>
        <dbReference type="EC" id="3.4.11.1"/>
    </reaction>
</comment>
<comment type="catalytic activity">
    <reaction evidence="1">
        <text>Release of an N-terminal amino acid, preferentially leucine, but not glutamic or aspartic acids.</text>
        <dbReference type="EC" id="3.4.11.10"/>
    </reaction>
</comment>
<comment type="cofactor">
    <cofactor evidence="1">
        <name>Mn(2+)</name>
        <dbReference type="ChEBI" id="CHEBI:29035"/>
    </cofactor>
    <text evidence="1">Binds 2 manganese ions per subunit.</text>
</comment>
<comment type="subcellular location">
    <subcellularLocation>
        <location evidence="1">Cytoplasm</location>
    </subcellularLocation>
</comment>
<comment type="similarity">
    <text evidence="1">Belongs to the peptidase M17 family.</text>
</comment>
<dbReference type="EC" id="3.4.11.1" evidence="1"/>
<dbReference type="EC" id="3.4.11.10" evidence="1"/>
<dbReference type="EMBL" id="CP001215">
    <property type="protein sequence ID" value="ACP13790.1"/>
    <property type="molecule type" value="Genomic_DNA"/>
</dbReference>
<dbReference type="RefSeq" id="WP_000487985.1">
    <property type="nucleotide sequence ID" value="NC_012581.1"/>
</dbReference>
<dbReference type="SMR" id="C3LC57"/>
<dbReference type="MEROPS" id="M17.010"/>
<dbReference type="GeneID" id="45024781"/>
<dbReference type="KEGG" id="bah:BAMEG_5213"/>
<dbReference type="HOGENOM" id="CLU_013734_6_0_9"/>
<dbReference type="GO" id="GO:0005737">
    <property type="term" value="C:cytoplasm"/>
    <property type="evidence" value="ECO:0007669"/>
    <property type="project" value="UniProtKB-SubCell"/>
</dbReference>
<dbReference type="GO" id="GO:0030145">
    <property type="term" value="F:manganese ion binding"/>
    <property type="evidence" value="ECO:0007669"/>
    <property type="project" value="UniProtKB-UniRule"/>
</dbReference>
<dbReference type="GO" id="GO:0070006">
    <property type="term" value="F:metalloaminopeptidase activity"/>
    <property type="evidence" value="ECO:0007669"/>
    <property type="project" value="InterPro"/>
</dbReference>
<dbReference type="GO" id="GO:0006508">
    <property type="term" value="P:proteolysis"/>
    <property type="evidence" value="ECO:0007669"/>
    <property type="project" value="UniProtKB-KW"/>
</dbReference>
<dbReference type="CDD" id="cd00433">
    <property type="entry name" value="Peptidase_M17"/>
    <property type="match status" value="1"/>
</dbReference>
<dbReference type="Gene3D" id="3.40.220.10">
    <property type="entry name" value="Leucine Aminopeptidase, subunit E, domain 1"/>
    <property type="match status" value="1"/>
</dbReference>
<dbReference type="Gene3D" id="3.40.630.10">
    <property type="entry name" value="Zn peptidases"/>
    <property type="match status" value="1"/>
</dbReference>
<dbReference type="HAMAP" id="MF_00181">
    <property type="entry name" value="Cytosol_peptidase_M17"/>
    <property type="match status" value="1"/>
</dbReference>
<dbReference type="InterPro" id="IPR011356">
    <property type="entry name" value="Leucine_aapep/pepB"/>
</dbReference>
<dbReference type="InterPro" id="IPR043472">
    <property type="entry name" value="Macro_dom-like"/>
</dbReference>
<dbReference type="InterPro" id="IPR000819">
    <property type="entry name" value="Peptidase_M17_C"/>
</dbReference>
<dbReference type="InterPro" id="IPR023042">
    <property type="entry name" value="Peptidase_M17_leu_NH2_pept"/>
</dbReference>
<dbReference type="InterPro" id="IPR008283">
    <property type="entry name" value="Peptidase_M17_N"/>
</dbReference>
<dbReference type="NCBIfam" id="NF002073">
    <property type="entry name" value="PRK00913.1-2"/>
    <property type="match status" value="1"/>
</dbReference>
<dbReference type="NCBIfam" id="NF002074">
    <property type="entry name" value="PRK00913.1-4"/>
    <property type="match status" value="1"/>
</dbReference>
<dbReference type="NCBIfam" id="NF002083">
    <property type="entry name" value="PRK00913.3-5"/>
    <property type="match status" value="1"/>
</dbReference>
<dbReference type="PANTHER" id="PTHR11963:SF23">
    <property type="entry name" value="CYTOSOL AMINOPEPTIDASE"/>
    <property type="match status" value="1"/>
</dbReference>
<dbReference type="PANTHER" id="PTHR11963">
    <property type="entry name" value="LEUCINE AMINOPEPTIDASE-RELATED"/>
    <property type="match status" value="1"/>
</dbReference>
<dbReference type="Pfam" id="PF00883">
    <property type="entry name" value="Peptidase_M17"/>
    <property type="match status" value="1"/>
</dbReference>
<dbReference type="Pfam" id="PF02789">
    <property type="entry name" value="Peptidase_M17_N"/>
    <property type="match status" value="1"/>
</dbReference>
<dbReference type="PRINTS" id="PR00481">
    <property type="entry name" value="LAMNOPPTDASE"/>
</dbReference>
<dbReference type="SUPFAM" id="SSF52949">
    <property type="entry name" value="Macro domain-like"/>
    <property type="match status" value="1"/>
</dbReference>
<dbReference type="SUPFAM" id="SSF53187">
    <property type="entry name" value="Zn-dependent exopeptidases"/>
    <property type="match status" value="1"/>
</dbReference>
<dbReference type="PROSITE" id="PS00631">
    <property type="entry name" value="CYTOSOL_AP"/>
    <property type="match status" value="1"/>
</dbReference>
<protein>
    <recommendedName>
        <fullName evidence="1">Probable cytosol aminopeptidase</fullName>
        <ecNumber evidence="1">3.4.11.1</ecNumber>
    </recommendedName>
    <alternativeName>
        <fullName evidence="1">Leucine aminopeptidase</fullName>
        <shortName evidence="1">LAP</shortName>
        <ecNumber evidence="1">3.4.11.10</ecNumber>
    </alternativeName>
    <alternativeName>
        <fullName evidence="1">Leucyl aminopeptidase</fullName>
    </alternativeName>
</protein>
<organism>
    <name type="scientific">Bacillus anthracis (strain CDC 684 / NRRL 3495)</name>
    <dbReference type="NCBI Taxonomy" id="568206"/>
    <lineage>
        <taxon>Bacteria</taxon>
        <taxon>Bacillati</taxon>
        <taxon>Bacillota</taxon>
        <taxon>Bacilli</taxon>
        <taxon>Bacillales</taxon>
        <taxon>Bacillaceae</taxon>
        <taxon>Bacillus</taxon>
        <taxon>Bacillus cereus group</taxon>
    </lineage>
</organism>
<keyword id="KW-0031">Aminopeptidase</keyword>
<keyword id="KW-0963">Cytoplasm</keyword>
<keyword id="KW-0378">Hydrolase</keyword>
<keyword id="KW-0464">Manganese</keyword>
<keyword id="KW-0479">Metal-binding</keyword>
<keyword id="KW-0645">Protease</keyword>
<feature type="chain" id="PRO_1000192704" description="Probable cytosol aminopeptidase">
    <location>
        <begin position="1"/>
        <end position="494"/>
    </location>
</feature>
<feature type="active site" evidence="1">
    <location>
        <position position="272"/>
    </location>
</feature>
<feature type="active site" evidence="1">
    <location>
        <position position="346"/>
    </location>
</feature>
<feature type="binding site" evidence="1">
    <location>
        <position position="260"/>
    </location>
    <ligand>
        <name>Mn(2+)</name>
        <dbReference type="ChEBI" id="CHEBI:29035"/>
        <label>2</label>
    </ligand>
</feature>
<feature type="binding site" evidence="1">
    <location>
        <position position="265"/>
    </location>
    <ligand>
        <name>Mn(2+)</name>
        <dbReference type="ChEBI" id="CHEBI:29035"/>
        <label>1</label>
    </ligand>
</feature>
<feature type="binding site" evidence="1">
    <location>
        <position position="265"/>
    </location>
    <ligand>
        <name>Mn(2+)</name>
        <dbReference type="ChEBI" id="CHEBI:29035"/>
        <label>2</label>
    </ligand>
</feature>
<feature type="binding site" evidence="1">
    <location>
        <position position="283"/>
    </location>
    <ligand>
        <name>Mn(2+)</name>
        <dbReference type="ChEBI" id="CHEBI:29035"/>
        <label>2</label>
    </ligand>
</feature>
<feature type="binding site" evidence="1">
    <location>
        <position position="342"/>
    </location>
    <ligand>
        <name>Mn(2+)</name>
        <dbReference type="ChEBI" id="CHEBI:29035"/>
        <label>1</label>
    </ligand>
</feature>
<feature type="binding site" evidence="1">
    <location>
        <position position="344"/>
    </location>
    <ligand>
        <name>Mn(2+)</name>
        <dbReference type="ChEBI" id="CHEBI:29035"/>
        <label>1</label>
    </ligand>
</feature>
<feature type="binding site" evidence="1">
    <location>
        <position position="344"/>
    </location>
    <ligand>
        <name>Mn(2+)</name>
        <dbReference type="ChEBI" id="CHEBI:29035"/>
        <label>2</label>
    </ligand>
</feature>
<proteinExistence type="inferred from homology"/>
<accession>C3LC57</accession>
<evidence type="ECO:0000255" key="1">
    <source>
        <dbReference type="HAMAP-Rule" id="MF_00181"/>
    </source>
</evidence>
<sequence>MFQVQKELASHEAVVVALFEEEKTSSFVQELDKAFEGQLQVLLEEKELSTKKKAISKVHSLGKTDVKRYYFVGLGKKESYTTETLRSALGKTFKTLQAAKVQDAAILLDSFVTEKLDAIDVAHIAAEVQGLGTYELQTYKSDKKDRVELEKFTAITAEDAQEIEAALTVGYVHGRATNSARTLVNMPPNVLTATKLAEYAVELAEKYDMDYKVLEKEEMEELGMGALLAVNQGSVEPPKMIALIYKGKEEWTDVIGFVGKGITYDTGGYSLKPREGMVGMKGDMGGAAAVLGAMEIIGELRPEQNVIAVIPSTDNVVSGTAFKPDDVITSMSGKTIEVLNTDAEGRLALADGITYAKKLGANYLIDVATLTGGVIVALGNHTTGAMTNNEELFEQVLEASMETDESIWQLPIFDRDKERVRNSKFADLNNSPGREGHAVMAGTFIGEFAEDTPWVHLDIAGTSESSGAHDLGPAGATGAMVRTLATLVERFGEE</sequence>